<feature type="chain" id="PRO_1000187464" description="Chromosome partition protein MukB">
    <location>
        <begin position="1"/>
        <end position="1496"/>
    </location>
</feature>
<feature type="region of interest" description="Flexible hinge" evidence="1">
    <location>
        <begin position="694"/>
        <end position="811"/>
    </location>
</feature>
<feature type="region of interest" description="Disordered" evidence="2">
    <location>
        <begin position="1082"/>
        <end position="1101"/>
    </location>
</feature>
<feature type="coiled-coil region" evidence="1">
    <location>
        <begin position="328"/>
        <end position="493"/>
    </location>
</feature>
<feature type="coiled-coil region" evidence="1">
    <location>
        <begin position="536"/>
        <end position="632"/>
    </location>
</feature>
<feature type="coiled-coil region" evidence="1">
    <location>
        <begin position="861"/>
        <end position="1171"/>
    </location>
</feature>
<feature type="coiled-coil region" evidence="1">
    <location>
        <begin position="1235"/>
        <end position="1291"/>
    </location>
</feature>
<feature type="compositionally biased region" description="Basic and acidic residues" evidence="2">
    <location>
        <begin position="1082"/>
        <end position="1091"/>
    </location>
</feature>
<feature type="binding site" evidence="1">
    <location>
        <begin position="63"/>
        <end position="70"/>
    </location>
    <ligand>
        <name>ATP</name>
        <dbReference type="ChEBI" id="CHEBI:30616"/>
    </ligand>
</feature>
<comment type="function">
    <text evidence="1">Plays a central role in chromosome condensation, segregation and cell cycle progression. Functions as a homodimer, which is essential for chromosome partition. Involved in negative DNA supercoiling in vivo, and by this means organize and compact chromosomes. May achieve or facilitate chromosome segregation by condensation DNA from both sides of a centrally located replisome during cell division.</text>
</comment>
<comment type="subunit">
    <text evidence="1">Homodimerization via its hinge domain. Binds to DNA via its C-terminal region. Interacts, and probably forms a ternary complex, with MukE and MukF via its C-terminal region. The complex formation is stimulated by calcium or magnesium. Interacts with tubulin-related protein FtsZ.</text>
</comment>
<comment type="subcellular location">
    <subcellularLocation>
        <location evidence="1">Cytoplasm</location>
        <location evidence="1">Nucleoid</location>
    </subcellularLocation>
    <text evidence="1">Restricted to the nucleoid region.</text>
</comment>
<comment type="domain">
    <text evidence="1">The hinge domain, which separates the large intramolecular coiled coil regions, allows the homodimerization, forming a V-shaped homodimer.</text>
</comment>
<comment type="similarity">
    <text evidence="1">Belongs to the SMC family. MukB subfamily.</text>
</comment>
<accession>B3H108</accession>
<name>MUKB_ACTP7</name>
<dbReference type="EMBL" id="CP001091">
    <property type="protein sequence ID" value="ACE61277.1"/>
    <property type="molecule type" value="Genomic_DNA"/>
</dbReference>
<dbReference type="RefSeq" id="WP_005617078.1">
    <property type="nucleotide sequence ID" value="NC_010939.1"/>
</dbReference>
<dbReference type="SMR" id="B3H108"/>
<dbReference type="KEGG" id="apa:APP7_0625"/>
<dbReference type="HOGENOM" id="CLU_004430_0_0_6"/>
<dbReference type="Proteomes" id="UP000001226">
    <property type="component" value="Chromosome"/>
</dbReference>
<dbReference type="GO" id="GO:0005737">
    <property type="term" value="C:cytoplasm"/>
    <property type="evidence" value="ECO:0007669"/>
    <property type="project" value="UniProtKB-UniRule"/>
</dbReference>
<dbReference type="GO" id="GO:0009295">
    <property type="term" value="C:nucleoid"/>
    <property type="evidence" value="ECO:0007669"/>
    <property type="project" value="UniProtKB-SubCell"/>
</dbReference>
<dbReference type="GO" id="GO:0005524">
    <property type="term" value="F:ATP binding"/>
    <property type="evidence" value="ECO:0007669"/>
    <property type="project" value="UniProtKB-UniRule"/>
</dbReference>
<dbReference type="GO" id="GO:0003677">
    <property type="term" value="F:DNA binding"/>
    <property type="evidence" value="ECO:0007669"/>
    <property type="project" value="UniProtKB-UniRule"/>
</dbReference>
<dbReference type="GO" id="GO:0051301">
    <property type="term" value="P:cell division"/>
    <property type="evidence" value="ECO:0007669"/>
    <property type="project" value="UniProtKB-KW"/>
</dbReference>
<dbReference type="GO" id="GO:0030261">
    <property type="term" value="P:chromosome condensation"/>
    <property type="evidence" value="ECO:0007669"/>
    <property type="project" value="UniProtKB-KW"/>
</dbReference>
<dbReference type="GO" id="GO:0007059">
    <property type="term" value="P:chromosome segregation"/>
    <property type="evidence" value="ECO:0007669"/>
    <property type="project" value="UniProtKB-UniRule"/>
</dbReference>
<dbReference type="GO" id="GO:0006260">
    <property type="term" value="P:DNA replication"/>
    <property type="evidence" value="ECO:0007669"/>
    <property type="project" value="UniProtKB-UniRule"/>
</dbReference>
<dbReference type="Gene3D" id="1.20.58.850">
    <property type="match status" value="1"/>
</dbReference>
<dbReference type="Gene3D" id="3.40.1140.10">
    <property type="match status" value="2"/>
</dbReference>
<dbReference type="Gene3D" id="1.20.5.420">
    <property type="entry name" value="Immunoglobulin FC, subunit C"/>
    <property type="match status" value="1"/>
</dbReference>
<dbReference type="Gene3D" id="3.30.70.3500">
    <property type="entry name" value="MukB, hinge domain"/>
    <property type="match status" value="1"/>
</dbReference>
<dbReference type="HAMAP" id="MF_01800">
    <property type="entry name" value="MukB"/>
    <property type="match status" value="1"/>
</dbReference>
<dbReference type="InterPro" id="IPR012090">
    <property type="entry name" value="MukB"/>
</dbReference>
<dbReference type="InterPro" id="IPR050308">
    <property type="entry name" value="MukB/SMC"/>
</dbReference>
<dbReference type="InterPro" id="IPR032520">
    <property type="entry name" value="MukB_hinge"/>
</dbReference>
<dbReference type="InterPro" id="IPR042501">
    <property type="entry name" value="MukB_hinge_sf"/>
</dbReference>
<dbReference type="InterPro" id="IPR007406">
    <property type="entry name" value="MukB_N_dom"/>
</dbReference>
<dbReference type="InterPro" id="IPR027417">
    <property type="entry name" value="P-loop_NTPase"/>
</dbReference>
<dbReference type="NCBIfam" id="NF003422">
    <property type="entry name" value="PRK04863.1"/>
    <property type="match status" value="1"/>
</dbReference>
<dbReference type="PANTHER" id="PTHR42963">
    <property type="entry name" value="CHROMOSOME PARTITION PROTEIN MUKB"/>
    <property type="match status" value="1"/>
</dbReference>
<dbReference type="PANTHER" id="PTHR42963:SF1">
    <property type="entry name" value="DUF4476 DOMAIN-CONTAINING PROTEIN"/>
    <property type="match status" value="1"/>
</dbReference>
<dbReference type="Pfam" id="PF04310">
    <property type="entry name" value="MukB"/>
    <property type="match status" value="1"/>
</dbReference>
<dbReference type="Pfam" id="PF16330">
    <property type="entry name" value="MukB_hinge"/>
    <property type="match status" value="1"/>
</dbReference>
<dbReference type="Pfam" id="PF13558">
    <property type="entry name" value="SbcC_Walker_B"/>
    <property type="match status" value="1"/>
</dbReference>
<dbReference type="PIRSF" id="PIRSF005246">
    <property type="entry name" value="MukB"/>
    <property type="match status" value="1"/>
</dbReference>
<dbReference type="SUPFAM" id="SSF52540">
    <property type="entry name" value="P-loop containing nucleoside triphosphate hydrolases"/>
    <property type="match status" value="1"/>
</dbReference>
<keyword id="KW-0067">ATP-binding</keyword>
<keyword id="KW-0131">Cell cycle</keyword>
<keyword id="KW-0132">Cell division</keyword>
<keyword id="KW-0159">Chromosome partition</keyword>
<keyword id="KW-0175">Coiled coil</keyword>
<keyword id="KW-0963">Cytoplasm</keyword>
<keyword id="KW-0226">DNA condensation</keyword>
<keyword id="KW-0238">DNA-binding</keyword>
<keyword id="KW-0547">Nucleotide-binding</keyword>
<proteinExistence type="inferred from homology"/>
<organism>
    <name type="scientific">Actinobacillus pleuropneumoniae serotype 7 (strain AP76)</name>
    <dbReference type="NCBI Taxonomy" id="537457"/>
    <lineage>
        <taxon>Bacteria</taxon>
        <taxon>Pseudomonadati</taxon>
        <taxon>Pseudomonadota</taxon>
        <taxon>Gammaproteobacteria</taxon>
        <taxon>Pasteurellales</taxon>
        <taxon>Pasteurellaceae</taxon>
        <taxon>Actinobacillus</taxon>
    </lineage>
</organism>
<reference key="1">
    <citation type="submission" date="2008-06" db="EMBL/GenBank/DDBJ databases">
        <title>Genome and proteome analysis of A. pleuropneumoniae serotype 7.</title>
        <authorList>
            <person name="Linke B."/>
            <person name="Buettner F."/>
            <person name="Martinez-Arias R."/>
            <person name="Goesmann A."/>
            <person name="Baltes N."/>
            <person name="Tegetmeyer H."/>
            <person name="Singh M."/>
            <person name="Gerlach G.F."/>
        </authorList>
    </citation>
    <scope>NUCLEOTIDE SEQUENCE [LARGE SCALE GENOMIC DNA]</scope>
    <source>
        <strain>AP76</strain>
    </source>
</reference>
<sequence length="1496" mass="170605">MTDTNELFEDQTTALQNSAPIAPLANPQHTVSRGKFRSLTLINWNGFFARTFDLDELVTTLSGGNGAGKSTTMAGFVTALIPDLTLLNFRNTTEAGSTSSSRDKGLYGKLKAGVCYAVLESLNSRGQRVITGVRLQQVAGRDKKVDIRSFSLQNVPMSDSIISILTEQVGEKARVLPLADLKDKFDGSEVLFKQYHSITDYHSFMFDLGVIPKRLRSSADRSKFYKLIEASLYGGISSVITKSLRDYLLPENTGVRQAFQDMESALRENRMTLEAIKVTQSDRDMFKHLITESTNYVSADYMRNANERRGNVQIALEQRRAWYESKSKLELEQQRLIEFSREVADISENESGLEAEYNSANDHLNLVMNALRHQEKIERYQDEVAELNEKLEEQQIALEEVSEQVETAQARADDADDQVEELRSQMADYQQALDAQQTRALQYQQAIAALEKAKQLCGLPHLDLHNVEDYHAEFAAQADDLTDQVFELEQRLSVSDMAKTQFEKAYELVCKISGEIDRSGAWNEARSLLTAFTDQKMQATQAVALRQKLADLEQRLHQQQNAERLLAEFNQKAQTQFETAEELEGYFEQQQARLEDVEAELAEFVEVRSTQRQQREQLNQQYNQLAKTAPAWHTAQSALARLEEQCGEKFEASQSVMQFMQNMLIKEREATLARDELARREAALDAQITRLSQPDGSDDVRLNQLAERFGGVLLSELYDDVSIDDAPYFSALYGEARHAIVVRDLESVKSQLEKLDDCPTDLYLIEGDPSAFDDAVFTAEELAEGVVVKVSDRQWRYSKFPEVPLFGRAAREKHLETLKAERDEVSEQHAERAFDVQKCQRLHQHLSQFVGTHLSLAFQPNPEEQMQEIAAERTEIERELNQAAGNEQQLRTQLDSAKAKLQMLNKILPLVSLLEDETLADRAEECRAQLDEAEEDEQFVRQFGNYLTQLEPIAASLKSDPAKFEQLEQDYQQAKAEQKQVQQKVFALSDVIQRRVHFSYEEAIGSEGSALTEQLRARLESAQREREQARDQLRQAQAQFTQYNQVLTGLRSSCDAKTQMLQELIREIDDLGVRGDIGAEERARSRRDELQQRLSQQRSRKGYLDKQLGTIEAEIDNLTRTLRKAERDYHTQRELVVQAKVSWCLVLKLSRNSDVEKRLNRRELAYQSAEELRSISDKALGALRTAVADNEYLRDSLRASEDSRKPENKVAFFIAVYQHLRERIRQDIIKTDDPIDAIEQMEIELSRLTNELTSREKKLAISAESVANILRKTIQREQNRILQLNQGLQNIAFGQVKGVRLVVNIRDTHAILLNALSNGREEHKDLFDSQKLSFSEALAMLYKRVNPHIEMGQRTPQTIGEELLDYRNYLDLEVETFRGADGWMRAESSALSTGEAIGTGMSILLMVVQSWEEESRRMRAKDILPSRLLFLDEAARLDATSINTLFELCERLDMQLLIAAPENISPERGTTYKLVRKITNNQEYVHVVGLKGFGQQ</sequence>
<protein>
    <recommendedName>
        <fullName evidence="1">Chromosome partition protein MukB</fullName>
    </recommendedName>
    <alternativeName>
        <fullName evidence="1">Structural maintenance of chromosome-related protein</fullName>
    </alternativeName>
</protein>
<gene>
    <name evidence="1" type="primary">mukB</name>
    <name type="ordered locus">APP7_0625</name>
</gene>
<evidence type="ECO:0000255" key="1">
    <source>
        <dbReference type="HAMAP-Rule" id="MF_01800"/>
    </source>
</evidence>
<evidence type="ECO:0000256" key="2">
    <source>
        <dbReference type="SAM" id="MobiDB-lite"/>
    </source>
</evidence>